<feature type="chain" id="PRO_1000000682" description="Thymidylate synthase">
    <location>
        <begin position="1"/>
        <end position="277"/>
    </location>
</feature>
<feature type="active site" description="Nucleophile" evidence="1">
    <location>
        <position position="159"/>
    </location>
</feature>
<feature type="binding site" description="in other chain" evidence="1">
    <location>
        <position position="21"/>
    </location>
    <ligand>
        <name>dUMP</name>
        <dbReference type="ChEBI" id="CHEBI:246422"/>
        <note>ligand shared between dimeric partners</note>
    </ligand>
</feature>
<feature type="binding site" evidence="1">
    <location>
        <position position="51"/>
    </location>
    <ligand>
        <name>(6R)-5,10-methylene-5,6,7,8-tetrahydrofolate</name>
        <dbReference type="ChEBI" id="CHEBI:15636"/>
    </ligand>
</feature>
<feature type="binding site" evidence="1">
    <location>
        <begin position="139"/>
        <end position="140"/>
    </location>
    <ligand>
        <name>dUMP</name>
        <dbReference type="ChEBI" id="CHEBI:246422"/>
        <note>ligand shared between dimeric partners</note>
    </ligand>
</feature>
<feature type="binding site" description="in other chain" evidence="1">
    <location>
        <begin position="179"/>
        <end position="182"/>
    </location>
    <ligand>
        <name>dUMP</name>
        <dbReference type="ChEBI" id="CHEBI:246422"/>
        <note>ligand shared between dimeric partners</note>
    </ligand>
</feature>
<feature type="binding site" evidence="1">
    <location>
        <position position="182"/>
    </location>
    <ligand>
        <name>(6R)-5,10-methylene-5,6,7,8-tetrahydrofolate</name>
        <dbReference type="ChEBI" id="CHEBI:15636"/>
    </ligand>
</feature>
<feature type="binding site" description="in other chain" evidence="1">
    <location>
        <position position="190"/>
    </location>
    <ligand>
        <name>dUMP</name>
        <dbReference type="ChEBI" id="CHEBI:246422"/>
        <note>ligand shared between dimeric partners</note>
    </ligand>
</feature>
<feature type="binding site" description="in other chain" evidence="1">
    <location>
        <begin position="220"/>
        <end position="222"/>
    </location>
    <ligand>
        <name>dUMP</name>
        <dbReference type="ChEBI" id="CHEBI:246422"/>
        <note>ligand shared between dimeric partners</note>
    </ligand>
</feature>
<feature type="binding site" evidence="1">
    <location>
        <position position="276"/>
    </location>
    <ligand>
        <name>(6R)-5,10-methylene-5,6,7,8-tetrahydrofolate</name>
        <dbReference type="ChEBI" id="CHEBI:15636"/>
    </ligand>
</feature>
<gene>
    <name evidence="1" type="primary">thyA</name>
    <name type="ordered locus">TM1040_1729</name>
</gene>
<comment type="function">
    <text evidence="1">Catalyzes the reductive methylation of 2'-deoxyuridine-5'-monophosphate (dUMP) to 2'-deoxythymidine-5'-monophosphate (dTMP) while utilizing 5,10-methylenetetrahydrofolate (mTHF) as the methyl donor and reductant in the reaction, yielding dihydrofolate (DHF) as a by-product. This enzymatic reaction provides an intracellular de novo source of dTMP, an essential precursor for DNA biosynthesis.</text>
</comment>
<comment type="catalytic activity">
    <reaction evidence="1">
        <text>dUMP + (6R)-5,10-methylene-5,6,7,8-tetrahydrofolate = 7,8-dihydrofolate + dTMP</text>
        <dbReference type="Rhea" id="RHEA:12104"/>
        <dbReference type="ChEBI" id="CHEBI:15636"/>
        <dbReference type="ChEBI" id="CHEBI:57451"/>
        <dbReference type="ChEBI" id="CHEBI:63528"/>
        <dbReference type="ChEBI" id="CHEBI:246422"/>
        <dbReference type="EC" id="2.1.1.45"/>
    </reaction>
</comment>
<comment type="pathway">
    <text evidence="1">Pyrimidine metabolism; dTTP biosynthesis.</text>
</comment>
<comment type="subunit">
    <text evidence="1">Homodimer.</text>
</comment>
<comment type="subcellular location">
    <subcellularLocation>
        <location evidence="1">Cytoplasm</location>
    </subcellularLocation>
</comment>
<comment type="similarity">
    <text evidence="1">Belongs to the thymidylate synthase family. Bacterial-type ThyA subfamily.</text>
</comment>
<proteinExistence type="inferred from homology"/>
<name>TYSY_RUEST</name>
<accession>Q1GFV4</accession>
<dbReference type="EC" id="2.1.1.45" evidence="1"/>
<dbReference type="EMBL" id="CP000377">
    <property type="protein sequence ID" value="ABF64462.1"/>
    <property type="molecule type" value="Genomic_DNA"/>
</dbReference>
<dbReference type="RefSeq" id="WP_011539057.1">
    <property type="nucleotide sequence ID" value="NC_008044.1"/>
</dbReference>
<dbReference type="SMR" id="Q1GFV4"/>
<dbReference type="STRING" id="292414.TM1040_1729"/>
<dbReference type="KEGG" id="sit:TM1040_1729"/>
<dbReference type="eggNOG" id="COG0207">
    <property type="taxonomic scope" value="Bacteria"/>
</dbReference>
<dbReference type="HOGENOM" id="CLU_021669_0_0_5"/>
<dbReference type="OrthoDB" id="9774633at2"/>
<dbReference type="UniPathway" id="UPA00575"/>
<dbReference type="Proteomes" id="UP000000636">
    <property type="component" value="Chromosome"/>
</dbReference>
<dbReference type="GO" id="GO:0005829">
    <property type="term" value="C:cytosol"/>
    <property type="evidence" value="ECO:0007669"/>
    <property type="project" value="TreeGrafter"/>
</dbReference>
<dbReference type="GO" id="GO:0004799">
    <property type="term" value="F:thymidylate synthase activity"/>
    <property type="evidence" value="ECO:0007669"/>
    <property type="project" value="UniProtKB-UniRule"/>
</dbReference>
<dbReference type="GO" id="GO:0006231">
    <property type="term" value="P:dTMP biosynthetic process"/>
    <property type="evidence" value="ECO:0007669"/>
    <property type="project" value="UniProtKB-UniRule"/>
</dbReference>
<dbReference type="GO" id="GO:0006235">
    <property type="term" value="P:dTTP biosynthetic process"/>
    <property type="evidence" value="ECO:0007669"/>
    <property type="project" value="UniProtKB-UniRule"/>
</dbReference>
<dbReference type="GO" id="GO:0032259">
    <property type="term" value="P:methylation"/>
    <property type="evidence" value="ECO:0007669"/>
    <property type="project" value="UniProtKB-KW"/>
</dbReference>
<dbReference type="CDD" id="cd00351">
    <property type="entry name" value="TS_Pyrimidine_HMase"/>
    <property type="match status" value="1"/>
</dbReference>
<dbReference type="FunFam" id="3.30.572.10:FF:000013">
    <property type="entry name" value="Thymidylate synthase"/>
    <property type="match status" value="1"/>
</dbReference>
<dbReference type="Gene3D" id="3.30.572.10">
    <property type="entry name" value="Thymidylate synthase/dCMP hydroxymethylase domain"/>
    <property type="match status" value="1"/>
</dbReference>
<dbReference type="HAMAP" id="MF_00008">
    <property type="entry name" value="Thymidy_synth_bact"/>
    <property type="match status" value="1"/>
</dbReference>
<dbReference type="InterPro" id="IPR045097">
    <property type="entry name" value="Thymidate_synth/dCMP_Mease"/>
</dbReference>
<dbReference type="InterPro" id="IPR023451">
    <property type="entry name" value="Thymidate_synth/dCMP_Mease_dom"/>
</dbReference>
<dbReference type="InterPro" id="IPR036926">
    <property type="entry name" value="Thymidate_synth/dCMP_Mease_sf"/>
</dbReference>
<dbReference type="InterPro" id="IPR000398">
    <property type="entry name" value="Thymidylate_synthase"/>
</dbReference>
<dbReference type="NCBIfam" id="NF002497">
    <property type="entry name" value="PRK01827.1-3"/>
    <property type="match status" value="1"/>
</dbReference>
<dbReference type="NCBIfam" id="TIGR03284">
    <property type="entry name" value="thym_sym"/>
    <property type="match status" value="2"/>
</dbReference>
<dbReference type="PANTHER" id="PTHR11548:SF9">
    <property type="entry name" value="THYMIDYLATE SYNTHASE"/>
    <property type="match status" value="1"/>
</dbReference>
<dbReference type="PANTHER" id="PTHR11548">
    <property type="entry name" value="THYMIDYLATE SYNTHASE 1"/>
    <property type="match status" value="1"/>
</dbReference>
<dbReference type="Pfam" id="PF00303">
    <property type="entry name" value="Thymidylat_synt"/>
    <property type="match status" value="1"/>
</dbReference>
<dbReference type="PRINTS" id="PR00108">
    <property type="entry name" value="THYMDSNTHASE"/>
</dbReference>
<dbReference type="SUPFAM" id="SSF55831">
    <property type="entry name" value="Thymidylate synthase/dCMP hydroxymethylase"/>
    <property type="match status" value="1"/>
</dbReference>
<sequence length="277" mass="31557">MQQYHDALQHILDHGVETTDRTGTGTLSCFGMQQRYDLAEGFPLVTTKKLHLRSIIHELLWFLSGDTNIRYLKENGVSIWDEWADENGDLGPVYGYQWRKFPRLELAEGTLGDEPLYRAGTVDQISELLDMIRKSPDSRRLIVTAWNPGDVPDMALPPCHSLWQLRILGGKMHLQLYQRSADMFLGVPFNIASYALLLHMLAHVTGYEVGSFVHTMGDAHIYSNHMEQVKLQLSRSPKSLPQLRIARDVSSIFDFKYEDFEILGYDPDPVIKAPVAV</sequence>
<organism>
    <name type="scientific">Ruegeria sp. (strain TM1040)</name>
    <name type="common">Silicibacter sp.</name>
    <dbReference type="NCBI Taxonomy" id="292414"/>
    <lineage>
        <taxon>Bacteria</taxon>
        <taxon>Pseudomonadati</taxon>
        <taxon>Pseudomonadota</taxon>
        <taxon>Alphaproteobacteria</taxon>
        <taxon>Rhodobacterales</taxon>
        <taxon>Roseobacteraceae</taxon>
        <taxon>Ruegeria</taxon>
    </lineage>
</organism>
<protein>
    <recommendedName>
        <fullName evidence="1">Thymidylate synthase</fullName>
        <shortName evidence="1">TS</shortName>
        <shortName evidence="1">TSase</shortName>
        <ecNumber evidence="1">2.1.1.45</ecNumber>
    </recommendedName>
</protein>
<keyword id="KW-0963">Cytoplasm</keyword>
<keyword id="KW-0489">Methyltransferase</keyword>
<keyword id="KW-0545">Nucleotide biosynthesis</keyword>
<keyword id="KW-1185">Reference proteome</keyword>
<keyword id="KW-0808">Transferase</keyword>
<evidence type="ECO:0000255" key="1">
    <source>
        <dbReference type="HAMAP-Rule" id="MF_00008"/>
    </source>
</evidence>
<reference key="1">
    <citation type="submission" date="2006-05" db="EMBL/GenBank/DDBJ databases">
        <title>Complete sequence of chromosome of Silicibacter sp. TM1040.</title>
        <authorList>
            <consortium name="US DOE Joint Genome Institute"/>
            <person name="Copeland A."/>
            <person name="Lucas S."/>
            <person name="Lapidus A."/>
            <person name="Barry K."/>
            <person name="Detter J.C."/>
            <person name="Glavina del Rio T."/>
            <person name="Hammon N."/>
            <person name="Israni S."/>
            <person name="Dalin E."/>
            <person name="Tice H."/>
            <person name="Pitluck S."/>
            <person name="Brettin T."/>
            <person name="Bruce D."/>
            <person name="Han C."/>
            <person name="Tapia R."/>
            <person name="Goodwin L."/>
            <person name="Thompson L.S."/>
            <person name="Gilna P."/>
            <person name="Schmutz J."/>
            <person name="Larimer F."/>
            <person name="Land M."/>
            <person name="Hauser L."/>
            <person name="Kyrpides N."/>
            <person name="Kim E."/>
            <person name="Belas R."/>
            <person name="Moran M.A."/>
            <person name="Buchan A."/>
            <person name="Gonzalez J.M."/>
            <person name="Schell M.A."/>
            <person name="Sun F."/>
            <person name="Richardson P."/>
        </authorList>
    </citation>
    <scope>NUCLEOTIDE SEQUENCE [LARGE SCALE GENOMIC DNA]</scope>
    <source>
        <strain>TM1040</strain>
    </source>
</reference>